<protein>
    <recommendedName>
        <fullName>Putative B3 domain-containing protein Os02g0455900</fullName>
    </recommendedName>
</protein>
<keyword id="KW-0238">DNA-binding</keyword>
<keyword id="KW-0539">Nucleus</keyword>
<keyword id="KW-1185">Reference proteome</keyword>
<keyword id="KW-0804">Transcription</keyword>
<keyword id="KW-0805">Transcription regulation</keyword>
<gene>
    <name type="ordered locus">Os02g0455900</name>
    <name type="ordered locus">LOC_Os02g25830</name>
    <name type="ORF">OSJNBa0008C07.36</name>
    <name type="ORF">OSJNBa0063K04.12</name>
</gene>
<evidence type="ECO:0000255" key="1">
    <source>
        <dbReference type="PROSITE-ProRule" id="PRU00326"/>
    </source>
</evidence>
<evidence type="ECO:0000256" key="2">
    <source>
        <dbReference type="SAM" id="MobiDB-lite"/>
    </source>
</evidence>
<feature type="chain" id="PRO_0000376947" description="Putative B3 domain-containing protein Os02g0455900">
    <location>
        <begin position="1"/>
        <end position="272"/>
    </location>
</feature>
<feature type="DNA-binding region" description="TF-B3" evidence="1">
    <location>
        <begin position="30"/>
        <end position="134"/>
    </location>
</feature>
<feature type="region of interest" description="Disordered" evidence="2">
    <location>
        <begin position="189"/>
        <end position="227"/>
    </location>
</feature>
<comment type="subcellular location">
    <subcellularLocation>
        <location evidence="1">Nucleus</location>
    </subcellularLocation>
</comment>
<reference key="1">
    <citation type="journal article" date="2005" name="Nature">
        <title>The map-based sequence of the rice genome.</title>
        <authorList>
            <consortium name="International rice genome sequencing project (IRGSP)"/>
        </authorList>
    </citation>
    <scope>NUCLEOTIDE SEQUENCE [LARGE SCALE GENOMIC DNA]</scope>
    <source>
        <strain>cv. Nipponbare</strain>
    </source>
</reference>
<reference key="2">
    <citation type="journal article" date="2013" name="Rice">
        <title>Improvement of the Oryza sativa Nipponbare reference genome using next generation sequence and optical map data.</title>
        <authorList>
            <person name="Kawahara Y."/>
            <person name="de la Bastide M."/>
            <person name="Hamilton J.P."/>
            <person name="Kanamori H."/>
            <person name="McCombie W.R."/>
            <person name="Ouyang S."/>
            <person name="Schwartz D.C."/>
            <person name="Tanaka T."/>
            <person name="Wu J."/>
            <person name="Zhou S."/>
            <person name="Childs K.L."/>
            <person name="Davidson R.M."/>
            <person name="Lin H."/>
            <person name="Quesada-Ocampo L."/>
            <person name="Vaillancourt B."/>
            <person name="Sakai H."/>
            <person name="Lee S.S."/>
            <person name="Kim J."/>
            <person name="Numa H."/>
            <person name="Itoh T."/>
            <person name="Buell C.R."/>
            <person name="Matsumoto T."/>
        </authorList>
    </citation>
    <scope>GENOME REANNOTATION</scope>
    <source>
        <strain>cv. Nipponbare</strain>
    </source>
</reference>
<proteinExistence type="inferred from homology"/>
<dbReference type="EMBL" id="AP005608">
    <property type="protein sequence ID" value="BAD19927.1"/>
    <property type="molecule type" value="Genomic_DNA"/>
</dbReference>
<dbReference type="EMBL" id="AP005696">
    <property type="protein sequence ID" value="BAD19990.1"/>
    <property type="molecule type" value="Genomic_DNA"/>
</dbReference>
<dbReference type="EMBL" id="AP014958">
    <property type="protein sequence ID" value="BAS78523.1"/>
    <property type="molecule type" value="Genomic_DNA"/>
</dbReference>
<dbReference type="SMR" id="Q6K3B1"/>
<dbReference type="PaxDb" id="39947-Q6K3B1"/>
<dbReference type="EnsemblPlants" id="Os02t0455900-00">
    <property type="protein sequence ID" value="Os02t0455900-00"/>
    <property type="gene ID" value="Os02g0455900"/>
</dbReference>
<dbReference type="Gramene" id="Os02t0455900-00">
    <property type="protein sequence ID" value="Os02t0455900-00"/>
    <property type="gene ID" value="Os02g0455900"/>
</dbReference>
<dbReference type="KEGG" id="osa:107275417"/>
<dbReference type="HOGENOM" id="CLU_1167334_0_0_1"/>
<dbReference type="InParanoid" id="Q6K3B1"/>
<dbReference type="OMA" id="PFSGHAT"/>
<dbReference type="OrthoDB" id="608326at2759"/>
<dbReference type="Proteomes" id="UP000000763">
    <property type="component" value="Chromosome 2"/>
</dbReference>
<dbReference type="Proteomes" id="UP000059680">
    <property type="component" value="Chromosome 2"/>
</dbReference>
<dbReference type="GO" id="GO:0005634">
    <property type="term" value="C:nucleus"/>
    <property type="evidence" value="ECO:0007669"/>
    <property type="project" value="UniProtKB-SubCell"/>
</dbReference>
<dbReference type="GO" id="GO:0003677">
    <property type="term" value="F:DNA binding"/>
    <property type="evidence" value="ECO:0007669"/>
    <property type="project" value="UniProtKB-KW"/>
</dbReference>
<dbReference type="GO" id="GO:0003700">
    <property type="term" value="F:DNA-binding transcription factor activity"/>
    <property type="evidence" value="ECO:0007669"/>
    <property type="project" value="InterPro"/>
</dbReference>
<dbReference type="CDD" id="cd10017">
    <property type="entry name" value="B3_DNA"/>
    <property type="match status" value="1"/>
</dbReference>
<dbReference type="Gene3D" id="2.40.330.10">
    <property type="entry name" value="DNA-binding pseudobarrel domain"/>
    <property type="match status" value="1"/>
</dbReference>
<dbReference type="InterPro" id="IPR003340">
    <property type="entry name" value="B3_DNA-bd"/>
</dbReference>
<dbReference type="InterPro" id="IPR015300">
    <property type="entry name" value="DNA-bd_pseudobarrel_sf"/>
</dbReference>
<dbReference type="InterPro" id="IPR044800">
    <property type="entry name" value="LEC2-like"/>
</dbReference>
<dbReference type="PANTHER" id="PTHR31140:SF139">
    <property type="entry name" value="B3 DOMAIN-CONTAINING PROTEIN OS02G0455900-RELATED"/>
    <property type="match status" value="1"/>
</dbReference>
<dbReference type="PANTHER" id="PTHR31140">
    <property type="entry name" value="B3 DOMAIN-CONTAINING TRANSCRIPTION FACTOR ABI3"/>
    <property type="match status" value="1"/>
</dbReference>
<dbReference type="Pfam" id="PF02362">
    <property type="entry name" value="B3"/>
    <property type="match status" value="1"/>
</dbReference>
<dbReference type="SMART" id="SM01019">
    <property type="entry name" value="B3"/>
    <property type="match status" value="1"/>
</dbReference>
<dbReference type="SUPFAM" id="SSF101936">
    <property type="entry name" value="DNA-binding pseudobarrel domain"/>
    <property type="match status" value="1"/>
</dbReference>
<dbReference type="PROSITE" id="PS50863">
    <property type="entry name" value="B3"/>
    <property type="match status" value="1"/>
</dbReference>
<organism>
    <name type="scientific">Oryza sativa subsp. japonica</name>
    <name type="common">Rice</name>
    <dbReference type="NCBI Taxonomy" id="39947"/>
    <lineage>
        <taxon>Eukaryota</taxon>
        <taxon>Viridiplantae</taxon>
        <taxon>Streptophyta</taxon>
        <taxon>Embryophyta</taxon>
        <taxon>Tracheophyta</taxon>
        <taxon>Spermatophyta</taxon>
        <taxon>Magnoliopsida</taxon>
        <taxon>Liliopsida</taxon>
        <taxon>Poales</taxon>
        <taxon>Poaceae</taxon>
        <taxon>BOP clade</taxon>
        <taxon>Oryzoideae</taxon>
        <taxon>Oryzeae</taxon>
        <taxon>Oryzinae</taxon>
        <taxon>Oryza</taxon>
        <taxon>Oryza sativa</taxon>
    </lineage>
</organism>
<accession>Q6K3B1</accession>
<accession>A0A0P0VIM5</accession>
<sequence>MAASPPLPTSIDGGQVLDDMEVVEMKYLFGKVLMPSDVSWDTEQLVIPDEHVGKLLDMVVMNRPEGGFFVVVVEDGEVTGKLWLFRYWKRDDVHCLTKGWGCYAREKGLRAGDTVSFFHSTACGRFFICCRCTCMSFLSLPTTSHRIHGSSVLPQPRAAQEAHHPFSGHATLCLGNKASDHSAPARHATASLGCAAAQPPQVPPTPTPRRRRRSMMVHPEPPEHTTDGMPVILESMALVSTPPVAKRVRLFGVYIDVPPLRPGGEATQDFNP</sequence>
<name>Y2559_ORYSJ</name>